<reference key="1">
    <citation type="submission" date="2006-05" db="EMBL/GenBank/DDBJ databases">
        <authorList>
            <consortium name="Genoscope"/>
        </authorList>
    </citation>
    <scope>NUCLEOTIDE SEQUENCE [LARGE SCALE GENOMIC DNA]</scope>
    <source>
        <strain>WH7803</strain>
    </source>
</reference>
<keyword id="KW-0004">4Fe-4S</keyword>
<keyword id="KW-0067">ATP-binding</keyword>
<keyword id="KW-0149">Chlorophyll biosynthesis</keyword>
<keyword id="KW-0408">Iron</keyword>
<keyword id="KW-0411">Iron-sulfur</keyword>
<keyword id="KW-0460">Magnesium</keyword>
<keyword id="KW-0479">Metal-binding</keyword>
<keyword id="KW-0547">Nucleotide-binding</keyword>
<keyword id="KW-0560">Oxidoreductase</keyword>
<keyword id="KW-0602">Photosynthesis</keyword>
<keyword id="KW-1185">Reference proteome</keyword>
<feature type="chain" id="PRO_0000324081" description="Light-independent protochlorophyllide reductase iron-sulfur ATP-binding protein">
    <location>
        <begin position="1"/>
        <end position="296"/>
    </location>
</feature>
<feature type="binding site" evidence="1">
    <location>
        <begin position="39"/>
        <end position="44"/>
    </location>
    <ligand>
        <name>ATP</name>
        <dbReference type="ChEBI" id="CHEBI:30616"/>
    </ligand>
</feature>
<feature type="binding site" evidence="1">
    <location>
        <position position="43"/>
    </location>
    <ligand>
        <name>Mg(2+)</name>
        <dbReference type="ChEBI" id="CHEBI:18420"/>
    </ligand>
</feature>
<feature type="binding site" evidence="1">
    <location>
        <position position="68"/>
    </location>
    <ligand>
        <name>ATP</name>
        <dbReference type="ChEBI" id="CHEBI:30616"/>
    </ligand>
</feature>
<feature type="binding site" evidence="1">
    <location>
        <position position="124"/>
    </location>
    <ligand>
        <name>[4Fe-4S] cluster</name>
        <dbReference type="ChEBI" id="CHEBI:49883"/>
        <note>ligand shared between dimeric partners</note>
    </ligand>
</feature>
<feature type="binding site" evidence="1">
    <location>
        <position position="158"/>
    </location>
    <ligand>
        <name>[4Fe-4S] cluster</name>
        <dbReference type="ChEBI" id="CHEBI:49883"/>
        <note>ligand shared between dimeric partners</note>
    </ligand>
</feature>
<feature type="binding site" evidence="1">
    <location>
        <begin position="209"/>
        <end position="210"/>
    </location>
    <ligand>
        <name>ATP</name>
        <dbReference type="ChEBI" id="CHEBI:30616"/>
    </ligand>
</feature>
<gene>
    <name evidence="1" type="primary">chlL</name>
    <name type="ordered locus">SynWH7803_0670</name>
</gene>
<organism>
    <name type="scientific">Synechococcus sp. (strain WH7803)</name>
    <dbReference type="NCBI Taxonomy" id="32051"/>
    <lineage>
        <taxon>Bacteria</taxon>
        <taxon>Bacillati</taxon>
        <taxon>Cyanobacteriota</taxon>
        <taxon>Cyanophyceae</taxon>
        <taxon>Synechococcales</taxon>
        <taxon>Synechococcaceae</taxon>
        <taxon>Synechococcus</taxon>
    </lineage>
</organism>
<proteinExistence type="inferred from homology"/>
<accession>A5GJI1</accession>
<evidence type="ECO:0000255" key="1">
    <source>
        <dbReference type="HAMAP-Rule" id="MF_00355"/>
    </source>
</evidence>
<comment type="function">
    <text evidence="1">Component of the dark-operative protochlorophyllide reductase (DPOR) that uses Mg-ATP and reduced ferredoxin to reduce ring D of protochlorophyllide (Pchlide) to form chlorophyllide a (Chlide). This reaction is light-independent. The L component serves as a unique electron donor to the NB-component of the complex, and binds Mg-ATP.</text>
</comment>
<comment type="catalytic activity">
    <reaction evidence="1">
        <text>chlorophyllide a + oxidized 2[4Fe-4S]-[ferredoxin] + 2 ADP + 2 phosphate = protochlorophyllide a + reduced 2[4Fe-4S]-[ferredoxin] + 2 ATP + 2 H2O</text>
        <dbReference type="Rhea" id="RHEA:28202"/>
        <dbReference type="Rhea" id="RHEA-COMP:10002"/>
        <dbReference type="Rhea" id="RHEA-COMP:10004"/>
        <dbReference type="ChEBI" id="CHEBI:15377"/>
        <dbReference type="ChEBI" id="CHEBI:30616"/>
        <dbReference type="ChEBI" id="CHEBI:33722"/>
        <dbReference type="ChEBI" id="CHEBI:33723"/>
        <dbReference type="ChEBI" id="CHEBI:43474"/>
        <dbReference type="ChEBI" id="CHEBI:83348"/>
        <dbReference type="ChEBI" id="CHEBI:83350"/>
        <dbReference type="ChEBI" id="CHEBI:456216"/>
        <dbReference type="EC" id="1.3.7.7"/>
    </reaction>
</comment>
<comment type="cofactor">
    <cofactor evidence="1">
        <name>[4Fe-4S] cluster</name>
        <dbReference type="ChEBI" id="CHEBI:49883"/>
    </cofactor>
    <text evidence="1">Binds 1 [4Fe-4S] cluster per dimer.</text>
</comment>
<comment type="pathway">
    <text evidence="1">Porphyrin-containing compound metabolism; chlorophyll biosynthesis (light-independent).</text>
</comment>
<comment type="subunit">
    <text evidence="1">Homodimer. Protochlorophyllide reductase is composed of three subunits; ChlL, ChlN and ChlB.</text>
</comment>
<comment type="similarity">
    <text evidence="1">Belongs to the NifH/BchL/ChlL family.</text>
</comment>
<sequence length="296" mass="32546">MTTTLKRPTDGEGSVQVHQDPSVNIEEETLVIAVYGKGGIGKSTTSSNLSAAFSKLGKRVLQIGCDPKHDSTFTLTHKMVPTVIDILEEVDFHSEELRPEDFVFSGFNGVQCVESGGPPAGTGCGGYVTGQTVKLLKEHHLLEDTDVVIFDVLGDVVCGGFAAPLQHANYCLIVTANDFDSIFAMNRIVQAIQAKAKNYKVRLGGVVANRSADTDQIDKFNERTGLRTMAHFKDVDAIRRSRLKKCTIFEMDDDDEAVQAVREEYLRLAQNMLDNVEPLEATSLKDREIFDLLGFD</sequence>
<dbReference type="EC" id="1.3.7.7" evidence="1"/>
<dbReference type="EMBL" id="CT971583">
    <property type="protein sequence ID" value="CAK23096.1"/>
    <property type="molecule type" value="Genomic_DNA"/>
</dbReference>
<dbReference type="SMR" id="A5GJI1"/>
<dbReference type="STRING" id="32051.SynWH7803_0670"/>
<dbReference type="KEGG" id="syx:SynWH7803_0670"/>
<dbReference type="eggNOG" id="COG1348">
    <property type="taxonomic scope" value="Bacteria"/>
</dbReference>
<dbReference type="HOGENOM" id="CLU_059373_2_0_3"/>
<dbReference type="OrthoDB" id="9778641at2"/>
<dbReference type="UniPathway" id="UPA00670"/>
<dbReference type="Proteomes" id="UP000001566">
    <property type="component" value="Chromosome"/>
</dbReference>
<dbReference type="GO" id="GO:0051539">
    <property type="term" value="F:4 iron, 4 sulfur cluster binding"/>
    <property type="evidence" value="ECO:0007669"/>
    <property type="project" value="UniProtKB-UniRule"/>
</dbReference>
<dbReference type="GO" id="GO:0005524">
    <property type="term" value="F:ATP binding"/>
    <property type="evidence" value="ECO:0007669"/>
    <property type="project" value="UniProtKB-UniRule"/>
</dbReference>
<dbReference type="GO" id="GO:0046872">
    <property type="term" value="F:metal ion binding"/>
    <property type="evidence" value="ECO:0007669"/>
    <property type="project" value="UniProtKB-KW"/>
</dbReference>
<dbReference type="GO" id="GO:0016730">
    <property type="term" value="F:oxidoreductase activity, acting on iron-sulfur proteins as donors"/>
    <property type="evidence" value="ECO:0007669"/>
    <property type="project" value="InterPro"/>
</dbReference>
<dbReference type="GO" id="GO:0016636">
    <property type="term" value="F:oxidoreductase activity, acting on the CH-CH group of donors, iron-sulfur protein as acceptor"/>
    <property type="evidence" value="ECO:0007669"/>
    <property type="project" value="UniProtKB-UniRule"/>
</dbReference>
<dbReference type="GO" id="GO:0036068">
    <property type="term" value="P:light-independent chlorophyll biosynthetic process"/>
    <property type="evidence" value="ECO:0007669"/>
    <property type="project" value="UniProtKB-UniRule"/>
</dbReference>
<dbReference type="GO" id="GO:0019685">
    <property type="term" value="P:photosynthesis, dark reaction"/>
    <property type="evidence" value="ECO:0007669"/>
    <property type="project" value="InterPro"/>
</dbReference>
<dbReference type="CDD" id="cd02032">
    <property type="entry name" value="Bchl-like"/>
    <property type="match status" value="1"/>
</dbReference>
<dbReference type="Gene3D" id="3.40.50.300">
    <property type="entry name" value="P-loop containing nucleotide triphosphate hydrolases"/>
    <property type="match status" value="1"/>
</dbReference>
<dbReference type="HAMAP" id="MF_00355">
    <property type="entry name" value="ChlL_BchL"/>
    <property type="match status" value="1"/>
</dbReference>
<dbReference type="InterPro" id="IPR030655">
    <property type="entry name" value="NifH/chlL_CS"/>
</dbReference>
<dbReference type="InterPro" id="IPR000392">
    <property type="entry name" value="NifH/frxC"/>
</dbReference>
<dbReference type="InterPro" id="IPR027417">
    <property type="entry name" value="P-loop_NTPase"/>
</dbReference>
<dbReference type="InterPro" id="IPR005971">
    <property type="entry name" value="Protochlorophyllide_ATP-bd"/>
</dbReference>
<dbReference type="NCBIfam" id="TIGR01281">
    <property type="entry name" value="DPOR_bchL"/>
    <property type="match status" value="1"/>
</dbReference>
<dbReference type="PANTHER" id="PTHR42864">
    <property type="entry name" value="LIGHT-INDEPENDENT PROTOCHLOROPHYLLIDE REDUCTASE IRON-SULFUR ATP-BINDING PROTEIN"/>
    <property type="match status" value="1"/>
</dbReference>
<dbReference type="PANTHER" id="PTHR42864:SF2">
    <property type="entry name" value="LIGHT-INDEPENDENT PROTOCHLOROPHYLLIDE REDUCTASE IRON-SULFUR ATP-BINDING PROTEIN"/>
    <property type="match status" value="1"/>
</dbReference>
<dbReference type="Pfam" id="PF00142">
    <property type="entry name" value="Fer4_NifH"/>
    <property type="match status" value="1"/>
</dbReference>
<dbReference type="PIRSF" id="PIRSF000363">
    <property type="entry name" value="Nitrogenase_iron"/>
    <property type="match status" value="1"/>
</dbReference>
<dbReference type="PRINTS" id="PR00091">
    <property type="entry name" value="NITROGNASEII"/>
</dbReference>
<dbReference type="SUPFAM" id="SSF52540">
    <property type="entry name" value="P-loop containing nucleoside triphosphate hydrolases"/>
    <property type="match status" value="1"/>
</dbReference>
<dbReference type="PROSITE" id="PS00746">
    <property type="entry name" value="NIFH_FRXC_1"/>
    <property type="match status" value="1"/>
</dbReference>
<dbReference type="PROSITE" id="PS00692">
    <property type="entry name" value="NIFH_FRXC_2"/>
    <property type="match status" value="1"/>
</dbReference>
<dbReference type="PROSITE" id="PS51026">
    <property type="entry name" value="NIFH_FRXC_3"/>
    <property type="match status" value="1"/>
</dbReference>
<protein>
    <recommendedName>
        <fullName evidence="1">Light-independent protochlorophyllide reductase iron-sulfur ATP-binding protein</fullName>
        <shortName evidence="1">DPOR subunit L</shortName>
        <shortName evidence="1">LI-POR subunit L</shortName>
        <ecNumber evidence="1">1.3.7.7</ecNumber>
    </recommendedName>
</protein>
<name>CHLL_SYNPW</name>